<name>RIBRX_MAIZE</name>
<gene>
    <name type="primary">PYRR</name>
    <name evidence="5" type="ORF">GRMZM2G090068</name>
</gene>
<dbReference type="EC" id="1.1.1.193"/>
<dbReference type="EC" id="3.2.2.-" evidence="4"/>
<dbReference type="EMBL" id="JX838796">
    <property type="protein sequence ID" value="AFX59276.1"/>
    <property type="molecule type" value="mRNA"/>
</dbReference>
<dbReference type="RefSeq" id="NP_001266474.1">
    <property type="nucleotide sequence ID" value="NM_001279545.1"/>
</dbReference>
<dbReference type="SMR" id="K7WIZ6"/>
<dbReference type="FunCoup" id="K7WIZ6">
    <property type="interactions" value="97"/>
</dbReference>
<dbReference type="STRING" id="4577.K7WIZ6"/>
<dbReference type="PaxDb" id="4577-GRMZM2G090068_P01"/>
<dbReference type="EnsemblPlants" id="Zm00001eb240960_T002">
    <property type="protein sequence ID" value="Zm00001eb240960_P002"/>
    <property type="gene ID" value="Zm00001eb240960"/>
</dbReference>
<dbReference type="GeneID" id="101202729"/>
<dbReference type="Gramene" id="Zm00001eb240960_T002">
    <property type="protein sequence ID" value="Zm00001eb240960_P002"/>
    <property type="gene ID" value="Zm00001eb240960"/>
</dbReference>
<dbReference type="KEGG" id="zma:101202729"/>
<dbReference type="eggNOG" id="KOG1018">
    <property type="taxonomic scope" value="Eukaryota"/>
</dbReference>
<dbReference type="HOGENOM" id="CLU_486092_0_0_1"/>
<dbReference type="InParanoid" id="K7WIZ6"/>
<dbReference type="OMA" id="GIRHPLK"/>
<dbReference type="OrthoDB" id="1933597at2759"/>
<dbReference type="UniPathway" id="UPA00275">
    <property type="reaction ID" value="UER00402"/>
</dbReference>
<dbReference type="Proteomes" id="UP000007305">
    <property type="component" value="Chromosome 5"/>
</dbReference>
<dbReference type="ExpressionAtlas" id="K7WIZ6">
    <property type="expression patterns" value="baseline and differential"/>
</dbReference>
<dbReference type="GO" id="GO:0009507">
    <property type="term" value="C:chloroplast"/>
    <property type="evidence" value="ECO:0000314"/>
    <property type="project" value="CACAO"/>
</dbReference>
<dbReference type="GO" id="GO:0008703">
    <property type="term" value="F:5-amino-6-(5-phosphoribosylamino)uracil reductase activity"/>
    <property type="evidence" value="ECO:0007669"/>
    <property type="project" value="UniProtKB-EC"/>
</dbReference>
<dbReference type="GO" id="GO:0008835">
    <property type="term" value="F:diaminohydroxyphosphoribosylaminopyrimidine deaminase activity"/>
    <property type="evidence" value="ECO:0000318"/>
    <property type="project" value="GO_Central"/>
</dbReference>
<dbReference type="GO" id="GO:0017113">
    <property type="term" value="F:dihydropyrimidine dehydrogenase (NADP+) activity"/>
    <property type="evidence" value="ECO:0000314"/>
    <property type="project" value="CACAO"/>
</dbReference>
<dbReference type="GO" id="GO:0016799">
    <property type="term" value="F:hydrolase activity, hydrolyzing N-glycosyl compounds"/>
    <property type="evidence" value="ECO:0000314"/>
    <property type="project" value="UniProtKB"/>
</dbReference>
<dbReference type="GO" id="GO:0050661">
    <property type="term" value="F:NADP binding"/>
    <property type="evidence" value="ECO:0007669"/>
    <property type="project" value="InterPro"/>
</dbReference>
<dbReference type="GO" id="GO:1901135">
    <property type="term" value="P:carbohydrate derivative metabolic process"/>
    <property type="evidence" value="ECO:0000314"/>
    <property type="project" value="UniProtKB"/>
</dbReference>
<dbReference type="GO" id="GO:0009658">
    <property type="term" value="P:chloroplast organization"/>
    <property type="evidence" value="ECO:0007669"/>
    <property type="project" value="EnsemblPlants"/>
</dbReference>
<dbReference type="GO" id="GO:0046443">
    <property type="term" value="P:FAD metabolic process"/>
    <property type="evidence" value="ECO:0007669"/>
    <property type="project" value="EnsemblPlants"/>
</dbReference>
<dbReference type="GO" id="GO:0009644">
    <property type="term" value="P:response to high light intensity"/>
    <property type="evidence" value="ECO:0007669"/>
    <property type="project" value="EnsemblPlants"/>
</dbReference>
<dbReference type="GO" id="GO:0009231">
    <property type="term" value="P:riboflavin biosynthetic process"/>
    <property type="evidence" value="ECO:0007669"/>
    <property type="project" value="UniProtKB-UniPathway"/>
</dbReference>
<dbReference type="CDD" id="cd15457">
    <property type="entry name" value="NADAR"/>
    <property type="match status" value="1"/>
</dbReference>
<dbReference type="FunFam" id="3.40.140.10:FF:000071">
    <property type="entry name" value="Riboflavin biosynthesis protein PYRR, chloroplastic"/>
    <property type="match status" value="1"/>
</dbReference>
<dbReference type="FunFam" id="3.40.430.10:FF:000005">
    <property type="entry name" value="Riboflavin biosynthesis protein ribD"/>
    <property type="match status" value="1"/>
</dbReference>
<dbReference type="FunFam" id="1.10.357.40:FF:000001">
    <property type="entry name" value="Swarming motility protein ybiA"/>
    <property type="match status" value="1"/>
</dbReference>
<dbReference type="Gene3D" id="3.40.140.10">
    <property type="entry name" value="Cytidine Deaminase, domain 2"/>
    <property type="match status" value="1"/>
</dbReference>
<dbReference type="Gene3D" id="3.40.430.10">
    <property type="entry name" value="Dihydrofolate Reductase, subunit A"/>
    <property type="match status" value="1"/>
</dbReference>
<dbReference type="Gene3D" id="1.10.357.40">
    <property type="entry name" value="YbiA-like"/>
    <property type="match status" value="1"/>
</dbReference>
<dbReference type="InterPro" id="IPR002125">
    <property type="entry name" value="CMP_dCMP_dom"/>
</dbReference>
<dbReference type="InterPro" id="IPR016193">
    <property type="entry name" value="Cytidine_deaminase-like"/>
</dbReference>
<dbReference type="InterPro" id="IPR024072">
    <property type="entry name" value="DHFR-like_dom_sf"/>
</dbReference>
<dbReference type="InterPro" id="IPR004794">
    <property type="entry name" value="Eubact_RibD"/>
</dbReference>
<dbReference type="InterPro" id="IPR012816">
    <property type="entry name" value="NADAR"/>
</dbReference>
<dbReference type="InterPro" id="IPR011549">
    <property type="entry name" value="RibD_C"/>
</dbReference>
<dbReference type="InterPro" id="IPR002734">
    <property type="entry name" value="RibDG_C"/>
</dbReference>
<dbReference type="InterPro" id="IPR050765">
    <property type="entry name" value="Riboflavin_Biosynth_HTPR"/>
</dbReference>
<dbReference type="InterPro" id="IPR037238">
    <property type="entry name" value="YbiA-like_sf"/>
</dbReference>
<dbReference type="NCBIfam" id="TIGR00326">
    <property type="entry name" value="eubact_ribD"/>
    <property type="match status" value="1"/>
</dbReference>
<dbReference type="NCBIfam" id="TIGR00227">
    <property type="entry name" value="ribD_Cterm"/>
    <property type="match status" value="1"/>
</dbReference>
<dbReference type="NCBIfam" id="TIGR02464">
    <property type="entry name" value="ribofla_fusion"/>
    <property type="match status" value="1"/>
</dbReference>
<dbReference type="PANTHER" id="PTHR38011:SF7">
    <property type="entry name" value="2,5-DIAMINO-6-RIBOSYLAMINO-4(3H)-PYRIMIDINONE 5'-PHOSPHATE REDUCTASE"/>
    <property type="match status" value="1"/>
</dbReference>
<dbReference type="PANTHER" id="PTHR38011">
    <property type="entry name" value="DIHYDROFOLATE REDUCTASE FAMILY PROTEIN (AFU_ORTHOLOGUE AFUA_8G06820)"/>
    <property type="match status" value="1"/>
</dbReference>
<dbReference type="Pfam" id="PF08719">
    <property type="entry name" value="NADAR"/>
    <property type="match status" value="1"/>
</dbReference>
<dbReference type="Pfam" id="PF01872">
    <property type="entry name" value="RibD_C"/>
    <property type="match status" value="1"/>
</dbReference>
<dbReference type="SUPFAM" id="SSF53927">
    <property type="entry name" value="Cytidine deaminase-like"/>
    <property type="match status" value="1"/>
</dbReference>
<dbReference type="SUPFAM" id="SSF53597">
    <property type="entry name" value="Dihydrofolate reductase-like"/>
    <property type="match status" value="1"/>
</dbReference>
<dbReference type="SUPFAM" id="SSF143990">
    <property type="entry name" value="YbiA-like"/>
    <property type="match status" value="1"/>
</dbReference>
<dbReference type="PROSITE" id="PS51747">
    <property type="entry name" value="CYT_DCMP_DEAMINASES_2"/>
    <property type="match status" value="1"/>
</dbReference>
<comment type="function">
    <text evidence="3">Pyrimidine reductase involved in the riboflavin biosynthesis pathway. Also has a non-functional N-terminal deaminase domain that lacks the catalytically essential zinc-binding residues. 39% activity when NADH replaces NADPH. No evidence for a phosphatase activity conferred by the N-terminal domain.</text>
</comment>
<comment type="function">
    <text evidence="4">Catalyzes the hydrolysis of the N-glycosidic bond in the first two intermediates of riboflavin biosynthesis, which are highly reactive metabolites, yielding relatively innocuous products. Thus, can divert a surplus of harmful intermediates into relatively harmless products and pre-empt the damage these intermediates would otherwise do. Has no activity against GTP, nucleoside monophosphates or ADP-ribose.</text>
</comment>
<comment type="catalytic activity">
    <reaction evidence="3">
        <text>5-amino-6-(5-phospho-D-ribitylamino)uracil + NADP(+) = 5-amino-6-(5-phospho-D-ribosylamino)uracil + NADPH + H(+)</text>
        <dbReference type="Rhea" id="RHEA:17845"/>
        <dbReference type="ChEBI" id="CHEBI:15378"/>
        <dbReference type="ChEBI" id="CHEBI:57783"/>
        <dbReference type="ChEBI" id="CHEBI:58349"/>
        <dbReference type="ChEBI" id="CHEBI:58421"/>
        <dbReference type="ChEBI" id="CHEBI:58453"/>
        <dbReference type="EC" id="1.1.1.193"/>
    </reaction>
</comment>
<comment type="catalytic activity">
    <reaction evidence="4">
        <text>2,5-diamino-6-hydroxy-4-(5-phosphoribosylamino)-pyrimidine + H2O = 2,5,6-triamino-4-hydroxypyrimidine + D-ribose 5-phosphate</text>
        <dbReference type="Rhea" id="RHEA:23436"/>
        <dbReference type="ChEBI" id="CHEBI:15377"/>
        <dbReference type="ChEBI" id="CHEBI:58614"/>
        <dbReference type="ChEBI" id="CHEBI:78346"/>
        <dbReference type="ChEBI" id="CHEBI:137796"/>
    </reaction>
</comment>
<comment type="catalytic activity">
    <reaction evidence="4">
        <text>5-amino-6-(5-phospho-D-ribosylamino)uracil + H2O = 5,6-diaminouracil + D-ribose 5-phosphate</text>
        <dbReference type="Rhea" id="RHEA:55020"/>
        <dbReference type="ChEBI" id="CHEBI:15377"/>
        <dbReference type="ChEBI" id="CHEBI:46252"/>
        <dbReference type="ChEBI" id="CHEBI:58453"/>
        <dbReference type="ChEBI" id="CHEBI:78346"/>
    </reaction>
</comment>
<comment type="biophysicochemical properties">
    <kinetics>
        <KM evidence="4">0.94 mM for 2,5-diamino-6-hydroxy-4-(5-phospho-D-ribosylamino)pyrimidine</KM>
        <KM evidence="4">0.19 mM for 5-amino-6-(5-phospho-D-ribosylamino)uracil</KM>
        <text evidence="4">kcat is 5.0 sec(-1) with 2,5-diamino-6-hydroxy-4-(5-phospho-D-ribosylamino)pyrimidine as substrate. kcat is 9.39 sec(-1) with 5-amino-6-(5-phospho-D-ribosylamino)uracil as substrate.</text>
    </kinetics>
</comment>
<comment type="pathway">
    <text>Cofactor biosynthesis; riboflavin biosynthesis; 5-amino-6-(D-ribitylamino)uracil from GTP: step 3/4.</text>
</comment>
<comment type="subcellular location">
    <subcellularLocation>
        <location evidence="3">Plastid</location>
        <location evidence="3">Chloroplast</location>
    </subcellularLocation>
</comment>
<comment type="disruption phenotype">
    <text evidence="3">Lethal when homozygous. Required for both endosperm and embryo formation in the seed.</text>
</comment>
<comment type="miscellaneous">
    <text>Unlike bacteria that have a bifunctional, two-domain RibD enzyme, plants have a monofunctional reductase and a monofunctional deaminase, each having an enzymatically inactive domain.</text>
</comment>
<comment type="similarity">
    <text evidence="5">In the C-terminal section; belongs to the YbiA family.</text>
</comment>
<feature type="transit peptide" description="Chloroplast" evidence="1">
    <location>
        <begin position="1"/>
        <end position="45"/>
    </location>
</feature>
<feature type="chain" id="PRO_0000422707" description="Riboflavin biosynthesis protein PYRR, chloroplastic">
    <location>
        <begin position="46"/>
        <end position="623"/>
    </location>
</feature>
<feature type="domain" description="CMP/dCMP-type deaminase" evidence="2">
    <location>
        <begin position="52"/>
        <end position="181"/>
    </location>
</feature>
<accession>K7WIZ6</accession>
<proteinExistence type="evidence at protein level"/>
<evidence type="ECO:0000255" key="1"/>
<evidence type="ECO:0000255" key="2">
    <source>
        <dbReference type="PROSITE-ProRule" id="PRU01083"/>
    </source>
</evidence>
<evidence type="ECO:0000269" key="3">
    <source>
    </source>
</evidence>
<evidence type="ECO:0000269" key="4">
    <source>
    </source>
</evidence>
<evidence type="ECO:0000305" key="5"/>
<evidence type="ECO:0000305" key="6">
    <source>
    </source>
</evidence>
<keyword id="KW-0150">Chloroplast</keyword>
<keyword id="KW-0326">Glycosidase</keyword>
<keyword id="KW-0378">Hydrolase</keyword>
<keyword id="KW-0511">Multifunctional enzyme</keyword>
<keyword id="KW-0521">NADP</keyword>
<keyword id="KW-0560">Oxidoreductase</keyword>
<keyword id="KW-0934">Plastid</keyword>
<keyword id="KW-1185">Reference proteome</keyword>
<keyword id="KW-0809">Transit peptide</keyword>
<reference key="1">
    <citation type="journal article" date="2013" name="Plant Physiol.">
        <title>Identification and characterization of the missing pyrimidine reductase in the plant riboflavin biosynthesis pathway.</title>
        <authorList>
            <person name="Hasnain G."/>
            <person name="Frelin O."/>
            <person name="Roje S."/>
            <person name="Ellens K.W."/>
            <person name="Ali K."/>
            <person name="Guan J.C."/>
            <person name="Garrett T.J."/>
            <person name="de Crecy-Lagard V."/>
            <person name="Gregory J.F. III"/>
            <person name="McCarty D.R."/>
            <person name="Hanson A.D."/>
        </authorList>
    </citation>
    <scope>NUCLEOTIDE SEQUENCE [MRNA]</scope>
    <scope>FUNCTION</scope>
    <scope>CATALYTIC ACTIVITY</scope>
    <scope>SUBCELLULAR LOCATION</scope>
    <scope>DISRUPTION PHENOTYPE</scope>
</reference>
<reference key="2">
    <citation type="journal article" date="2015" name="Biochem. J.">
        <title>A directed-overflow and damage-control N-glycosidase in riboflavin biosynthesis.</title>
        <authorList>
            <person name="Frelin O."/>
            <person name="Huang L."/>
            <person name="Hasnain G."/>
            <person name="Jeffryes J.G."/>
            <person name="Ziemak M.J."/>
            <person name="Rocca J.R."/>
            <person name="Wang B."/>
            <person name="Rice J."/>
            <person name="Roje S."/>
            <person name="Yurgel S.N."/>
            <person name="Gregory J.F. III"/>
            <person name="Edison A.S."/>
            <person name="Henry C.S."/>
            <person name="de Crecy-Lagard V."/>
            <person name="Hanson A.D."/>
        </authorList>
    </citation>
    <scope>FUNCTION</scope>
    <scope>CATALYTIC ACTIVITY</scope>
    <scope>SUBSTRATE SPECIFICITY</scope>
    <scope>BIOPHYSICOCHEMICAL PROPERTIES</scope>
</reference>
<sequence length="623" mass="67802">MPLPQPLLGGASPAPARAASSFLHPLLHTRHRVSTAPAAASSFVPASHSSHANDAMLLRRAADVADRSAGLTSPHPNFGCVIARPQLNTDSADSWVVGEGFLYAQGTPCAELLASQEAGEHARGGTAYLNLEPGDCFGDNTAVGSLVQAGITRVVVGLRHPLKHLRGKAIQALRNEGIQVDVVGEDLQSKLFKEALKSCLTVNAPLLYRAAFHVPFSVLKYAMTADGKIAASSGHASWISGKASRGRVFELRGRSDAVIVGGNTVRFDDPRLTARHVKGHVPVRIVMSQSLNLPEEANLWNLNDAYTIVATQRGARRDFQRKLAMKGVEVVEFDMLNPRAVMSYCYDRGYLAVLWECGGTLAASAISASVIHKVYAFWAPKIIGGLNAPTPVGELGMSQMTQAINLIDVSYEQIDRDMLMSGFIEPIPDLSPVIPSVEEIPSIDPEVSPYETNIISFYKTWDIFGAFSNFSPHSIQMPDENGDYFTWPTVEHYYQAHKFVGVDNPQARDIVQEIKLAKSPEEAARIGRTRQKGFPELVRTDWESTKIDVMYRAIKCKFSTYPHLTNMLLSTAGSVLVEASPHDLFWGGGREGEGLNYLGRLLMQLRSEILGTVPASAEVGEAD</sequence>
<organism>
    <name type="scientific">Zea mays</name>
    <name type="common">Maize</name>
    <dbReference type="NCBI Taxonomy" id="4577"/>
    <lineage>
        <taxon>Eukaryota</taxon>
        <taxon>Viridiplantae</taxon>
        <taxon>Streptophyta</taxon>
        <taxon>Embryophyta</taxon>
        <taxon>Tracheophyta</taxon>
        <taxon>Spermatophyta</taxon>
        <taxon>Magnoliopsida</taxon>
        <taxon>Liliopsida</taxon>
        <taxon>Poales</taxon>
        <taxon>Poaceae</taxon>
        <taxon>PACMAD clade</taxon>
        <taxon>Panicoideae</taxon>
        <taxon>Andropogonodae</taxon>
        <taxon>Andropogoneae</taxon>
        <taxon>Tripsacinae</taxon>
        <taxon>Zea</taxon>
    </lineage>
</organism>
<protein>
    <recommendedName>
        <fullName>Riboflavin biosynthesis protein PYRR, chloroplastic</fullName>
    </recommendedName>
    <domain>
        <recommendedName>
            <fullName>Inactive diaminohydroxyphosphoribosylaminopyrimidine deaminase</fullName>
            <shortName>DRAP deaminase</shortName>
        </recommendedName>
        <alternativeName>
            <fullName>Riboflavin-specific deaminase</fullName>
        </alternativeName>
    </domain>
    <domain>
        <recommendedName>
            <fullName>5-amino-6-(5-phosphoribosylamino)uracil reductase</fullName>
            <ecNumber>1.1.1.193</ecNumber>
        </recommendedName>
        <alternativeName>
            <fullName>HTP reductase</fullName>
        </alternativeName>
    </domain>
    <domain>
        <recommendedName>
            <fullName evidence="6">Riboflavin biosynthesis intermediates N-glycosidase</fullName>
            <ecNumber evidence="4">3.2.2.-</ecNumber>
        </recommendedName>
    </domain>
</protein>